<feature type="chain" id="PRO_1000051699" description="UPF0232 protein MUL_0004">
    <location>
        <begin position="1"/>
        <end position="187"/>
    </location>
</feature>
<feature type="region of interest" description="Disordered" evidence="2">
    <location>
        <begin position="1"/>
        <end position="77"/>
    </location>
</feature>
<feature type="region of interest" description="Disordered" evidence="2">
    <location>
        <begin position="166"/>
        <end position="187"/>
    </location>
</feature>
<feature type="compositionally biased region" description="Gly residues" evidence="2">
    <location>
        <begin position="1"/>
        <end position="12"/>
    </location>
</feature>
<feature type="compositionally biased region" description="Basic and acidic residues" evidence="2">
    <location>
        <begin position="14"/>
        <end position="30"/>
    </location>
</feature>
<feature type="compositionally biased region" description="Low complexity" evidence="2">
    <location>
        <begin position="31"/>
        <end position="55"/>
    </location>
</feature>
<name>Y004_MYCUA</name>
<organism>
    <name type="scientific">Mycobacterium ulcerans (strain Agy99)</name>
    <dbReference type="NCBI Taxonomy" id="362242"/>
    <lineage>
        <taxon>Bacteria</taxon>
        <taxon>Bacillati</taxon>
        <taxon>Actinomycetota</taxon>
        <taxon>Actinomycetes</taxon>
        <taxon>Mycobacteriales</taxon>
        <taxon>Mycobacteriaceae</taxon>
        <taxon>Mycobacterium</taxon>
        <taxon>Mycobacterium ulcerans group</taxon>
    </lineage>
</organism>
<reference key="1">
    <citation type="journal article" date="2007" name="Genome Res.">
        <title>Reductive evolution and niche adaptation inferred from the genome of Mycobacterium ulcerans, the causative agent of Buruli ulcer.</title>
        <authorList>
            <person name="Stinear T.P."/>
            <person name="Seemann T."/>
            <person name="Pidot S."/>
            <person name="Frigui W."/>
            <person name="Reysset G."/>
            <person name="Garnier T."/>
            <person name="Meurice G."/>
            <person name="Simon D."/>
            <person name="Bouchier C."/>
            <person name="Ma L."/>
            <person name="Tichit M."/>
            <person name="Porter J.L."/>
            <person name="Ryan J."/>
            <person name="Johnson P.D.R."/>
            <person name="Davies J.K."/>
            <person name="Jenkin G.A."/>
            <person name="Small P.L.C."/>
            <person name="Jones L.M."/>
            <person name="Tekaia F."/>
            <person name="Laval F."/>
            <person name="Daffe M."/>
            <person name="Parkhill J."/>
            <person name="Cole S.T."/>
        </authorList>
    </citation>
    <scope>NUCLEOTIDE SEQUENCE [LARGE SCALE GENOMIC DNA]</scope>
    <source>
        <strain>Agy99</strain>
    </source>
</reference>
<sequence>MNGDGEQPGPGDGAARDELPSMDLVRRTLAEARAAARARGQDPGRGFAAGPAPRRVAGRRRSWSGPGPDTRDPQPLGKLTRDLAKKRGWSGHVAEGTVLGQWSQVVGAQIADHATPTALNEGVLSVTAESTAWATQLRIMQSQLLAKIAAAVGNGVVTSLKITGPASPSWRKGPRHIAGRGPRDTYG</sequence>
<gene>
    <name type="ordered locus">MUL_0004</name>
</gene>
<evidence type="ECO:0000255" key="1">
    <source>
        <dbReference type="HAMAP-Rule" id="MF_00630"/>
    </source>
</evidence>
<evidence type="ECO:0000256" key="2">
    <source>
        <dbReference type="SAM" id="MobiDB-lite"/>
    </source>
</evidence>
<proteinExistence type="inferred from homology"/>
<accession>A0PKB5</accession>
<comment type="similarity">
    <text evidence="1">Belongs to the UPF0232 family.</text>
</comment>
<protein>
    <recommendedName>
        <fullName evidence="1">UPF0232 protein MUL_0004</fullName>
    </recommendedName>
</protein>
<dbReference type="EMBL" id="CP000325">
    <property type="protein sequence ID" value="ABL02784.1"/>
    <property type="molecule type" value="Genomic_DNA"/>
</dbReference>
<dbReference type="RefSeq" id="WP_011738409.1">
    <property type="nucleotide sequence ID" value="NC_008611.1"/>
</dbReference>
<dbReference type="SMR" id="A0PKB5"/>
<dbReference type="KEGG" id="mul:MUL_0004"/>
<dbReference type="eggNOG" id="COG5512">
    <property type="taxonomic scope" value="Bacteria"/>
</dbReference>
<dbReference type="HOGENOM" id="CLU_087206_0_1_11"/>
<dbReference type="Proteomes" id="UP000000765">
    <property type="component" value="Chromosome"/>
</dbReference>
<dbReference type="HAMAP" id="MF_00630">
    <property type="entry name" value="UPF0232"/>
    <property type="match status" value="1"/>
</dbReference>
<dbReference type="InterPro" id="IPR007922">
    <property type="entry name" value="DciA-like"/>
</dbReference>
<dbReference type="InterPro" id="IPR023007">
    <property type="entry name" value="UPF0232_actinobac"/>
</dbReference>
<dbReference type="NCBIfam" id="NF002871">
    <property type="entry name" value="PRK03195.1"/>
    <property type="match status" value="1"/>
</dbReference>
<dbReference type="PANTHER" id="PTHR36456">
    <property type="entry name" value="UPF0232 PROTEIN SCO3875"/>
    <property type="match status" value="1"/>
</dbReference>
<dbReference type="PANTHER" id="PTHR36456:SF1">
    <property type="entry name" value="UPF0232 PROTEIN SCO3875"/>
    <property type="match status" value="1"/>
</dbReference>
<dbReference type="Pfam" id="PF05258">
    <property type="entry name" value="DciA"/>
    <property type="match status" value="1"/>
</dbReference>